<protein>
    <recommendedName>
        <fullName evidence="5">Large ribosomal subunit protein uL4</fullName>
    </recommendedName>
    <alternativeName>
        <fullName>50S ribosomal protein L4</fullName>
    </alternativeName>
    <alternativeName>
        <fullName>Hl6</fullName>
    </alternativeName>
    <alternativeName>
        <fullName>Hmal4</fullName>
    </alternativeName>
</protein>
<name>RL4_HALMA</name>
<accession>P12735</accession>
<accession>Q5V1S5</accession>
<comment type="function">
    <text evidence="1">One of the primary rRNA binding proteins, this protein initially binds near the 5'-end of the 23S rRNA. It is important during the early stages of 50S assembly (By similarity).</text>
</comment>
<comment type="function">
    <text>Makes multiple contacts with different domains of the 23S rRNA in the assembled 50S subunit.</text>
</comment>
<comment type="function">
    <text>Forms part of the polypeptide exit tunnel, in which it helps forms a bend with protein L22. Contacts the macrolide antibiotic spiramycin in the polypeptide exit tunnel.</text>
</comment>
<comment type="subunit">
    <text evidence="3 4">Part of the 50S ribosomal subunit. Interacts weakly with proteins L18e, L24 and L37e. Has been cross-linked to L18e.</text>
</comment>
<comment type="similarity">
    <text evidence="5">Belongs to the universal ribosomal protein uL4 family.</text>
</comment>
<sequence length="246" mass="26420">MQATIYDLDGNTDGEVDLPDVFETPVRSDLIGKAVRAAQANRKQDYGSDEYAGLRTPAESFGSGRGQAHVPKQDGRARRVPQAVKGRSAHPPKTEKDRSLDLNDKERQLAVRSALAATADADLVADRGHEFDRDEVPVVVSDDFEDLVKTQEVVSLLEALDVHADIDRADETKIKAGQGSARGRKYRRPASILFVTSDEPSTAARNLAGADVATASEVNTEDLAPGGAPGRLTVFTESALAEVAER</sequence>
<reference key="1">
    <citation type="journal article" date="1990" name="J. Biol. Chem.">
        <title>Organization and nucleotide sequence of a gene cluster coding for eight ribosomal proteins in the archaebacterium Halobacterium marismortui.</title>
        <authorList>
            <person name="Arndt E."/>
            <person name="Kroemer W."/>
            <person name="Hatakeyama T."/>
        </authorList>
    </citation>
    <scope>NUCLEOTIDE SEQUENCE [GENOMIC DNA]</scope>
</reference>
<reference key="2">
    <citation type="journal article" date="2004" name="Genome Res.">
        <title>Genome sequence of Haloarcula marismortui: a halophilic archaeon from the Dead Sea.</title>
        <authorList>
            <person name="Baliga N.S."/>
            <person name="Bonneau R."/>
            <person name="Facciotti M.T."/>
            <person name="Pan M."/>
            <person name="Glusman G."/>
            <person name="Deutsch E.W."/>
            <person name="Shannon P."/>
            <person name="Chiu Y."/>
            <person name="Weng R.S."/>
            <person name="Gan R.R."/>
            <person name="Hung P."/>
            <person name="Date S.V."/>
            <person name="Marcotte E."/>
            <person name="Hood L."/>
            <person name="Ng W.V."/>
        </authorList>
    </citation>
    <scope>NUCLEOTIDE SEQUENCE [LARGE SCALE GENOMIC DNA]</scope>
    <source>
        <strain>ATCC 43049 / DSM 3752 / JCM 8966 / VKM B-1809</strain>
    </source>
</reference>
<reference key="3">
    <citation type="journal article" date="1988" name="Biochemistry">
        <title>Extended N-terminal sequencing of proteins of archaebacterial ribosomes blotted from two-dimensional gels onto glass fiber and poly(vinylidene difluoride) membrane.</title>
        <authorList>
            <person name="Walsh M.J."/>
            <person name="McDougall J."/>
            <person name="Wittmann-Liebold B."/>
        </authorList>
    </citation>
    <scope>PROTEIN SEQUENCE OF 1-28 AND 153-181</scope>
</reference>
<reference key="4">
    <citation type="journal article" date="1993" name="J. Mol. Biol.">
        <title>Localization of proteins HL29 and HL31 from Haloarcula marismortui within the 50 S ribosomal subunit by chemical crosslinking.</title>
        <authorList>
            <person name="Bergmann U."/>
            <person name="Wittmann-Liebold B."/>
        </authorList>
    </citation>
    <scope>PROTEIN SEQUENCE OF 34-47; 86-117 AND 176-200</scope>
    <scope>CROSS-LINKING TO L18E</scope>
</reference>
<reference key="5">
    <citation type="journal article" date="2000" name="Science">
        <title>The complete atomic structure of the large ribosomal subunit at 2.4 A resolution.</title>
        <authorList>
            <person name="Ban N."/>
            <person name="Nissen P."/>
            <person name="Hansen J."/>
            <person name="Moore P.B."/>
            <person name="Steitz T.A."/>
        </authorList>
    </citation>
    <scope>X-RAY CRYSTALLOGRAPHY (2.4 ANGSTROMS) OF THE 50S SUBUNIT</scope>
    <source>
        <strain>ATCC 43049 / DSM 3752 / JCM 8966 / VKM B-1809</strain>
    </source>
</reference>
<reference key="6">
    <citation type="journal article" date="2000" name="Science">
        <title>The structural basis of ribosome activity in peptide bond synthesis.</title>
        <authorList>
            <person name="Nissen P."/>
            <person name="Hansen J."/>
            <person name="Ban N."/>
            <person name="Moore P.B."/>
            <person name="Steitz T.A."/>
        </authorList>
    </citation>
    <scope>X-RAY CRYSTALLOGRAPHY (3.0 ANGSTROMS) OF THE 50S SUBUNIT</scope>
    <source>
        <strain>ATCC 43049 / DSM 3752 / JCM 8966 / VKM B-1809</strain>
    </source>
</reference>
<reference key="7">
    <citation type="journal article" date="2002" name="Nat. Struct. Biol.">
        <title>A pre-translocational intermediate in protein synthesis observed in crystals of enzymatically active 50S subunits.</title>
        <authorList>
            <person name="Schmeing T.M."/>
            <person name="Seila A.C."/>
            <person name="Hansen J.L."/>
            <person name="Freeborn B."/>
            <person name="Soukup J.K."/>
            <person name="Scaringe S.A."/>
            <person name="Strobel S.A."/>
            <person name="Moore P.B."/>
            <person name="Steitz T.A."/>
        </authorList>
    </citation>
    <scope>X-RAY CRYSTALLOGRAPHY (3.1 ANGSTROMS) OF THE 50S SUBUNIT</scope>
    <source>
        <strain>ATCC 43049 / DSM 3752 / JCM 8966 / VKM B-1809</strain>
    </source>
</reference>
<reference key="8">
    <citation type="journal article" date="2001" name="EMBO J.">
        <title>The kink-turn: a new RNA secondary structure motif.</title>
        <authorList>
            <person name="Klein D.J."/>
            <person name="Schmeing T.M."/>
            <person name="Moore P.B."/>
            <person name="Steitz T.A."/>
        </authorList>
    </citation>
    <scope>X-RAY CRYSTALLOGRAPHY (2.4 ANGSTROMS) OF THE 50S SUBUNIT</scope>
    <source>
        <strain>ATCC 43049 / DSM 3752 / JCM 8966 / VKM B-1809</strain>
    </source>
</reference>
<reference key="9">
    <citation type="journal article" date="2002" name="Mol. Cell">
        <title>The structures of four macrolide antibiotics bound to the large ribosomal subunit.</title>
        <authorList>
            <person name="Hansen J.L."/>
            <person name="Ippolito J.A."/>
            <person name="Ban N."/>
            <person name="Nissen P."/>
            <person name="Moore P.B."/>
            <person name="Steitz T.A."/>
        </authorList>
    </citation>
    <scope>X-RAY CRYSTALLOGRAPHY (3.0 ANGSTROMS) OF THE 50S SUBUNIT IN COMPLEX WITH FOUR MACROLIDE ANTIBIOTICS</scope>
    <source>
        <strain>ATCC 43049 / DSM 3752 / JCM 8966 / VKM B-1809</strain>
    </source>
</reference>
<reference key="10">
    <citation type="journal article" date="2002" name="Proc. Natl. Acad. Sci. U.S.A.">
        <title>Structural insights into peptide bond formation.</title>
        <authorList>
            <person name="Hansen J.L."/>
            <person name="Schmeing T.M."/>
            <person name="Moore P.B."/>
            <person name="Steitz T.A."/>
        </authorList>
    </citation>
    <scope>X-RAY CRYSTALLOGRAPHY (2.8 ANGSTROMS) OF THE 50S SUBUNIT</scope>
    <source>
        <strain>ATCC 43049 / DSM 3752 / JCM 8966 / VKM B-1809</strain>
    </source>
</reference>
<reference key="11">
    <citation type="journal article" date="2003" name="J. Mol. Biol.">
        <title>Structures of five antibiotics bound at the peptidyl transferase center of the large ribosomal subunit.</title>
        <authorList>
            <person name="Hansen J.L."/>
            <person name="Moore P.B."/>
            <person name="Steitz T.A."/>
        </authorList>
    </citation>
    <scope>X-RAY CRYSTALLOGRAPHY (3.0 ANGSTROMS) OF THE 50S SUBUNIT IN COMPLEX WITH FIVE ANTIBIOTICS AT THE PEPTIDYL TRANSFERASE CENTER</scope>
    <source>
        <strain>ATCC 43049 / DSM 3752 / JCM 8966 / VKM B-1809</strain>
    </source>
</reference>
<reference key="12">
    <citation type="journal article" date="2003" name="RNA">
        <title>Structures of deacylated tRNA mimics bound to the E site of the large ribosomal subunit.</title>
        <authorList>
            <person name="Schmeing T.M."/>
            <person name="Moore P.B."/>
            <person name="Steitz T.A."/>
        </authorList>
    </citation>
    <scope>X-RAY CRYSTALLOGRAPHY (2.9 ANGSTROMS) OF THE 50S SUBUNIT WITH TWO DIFFERENT E SITE SUBSTRATES</scope>
</reference>
<reference key="13">
    <citation type="journal article" date="2013" name="Acta Crystallogr. D">
        <title>Revisiting the Haloarcula marismortui 50S ribosomal subunit model.</title>
        <authorList>
            <person name="Gabdulkhakov A."/>
            <person name="Nikonov S."/>
            <person name="Garber M."/>
        </authorList>
    </citation>
    <scope>X-RAY CRYSTALLOGRAPHY (2.4 ANGSTROMS) OF THE 50S SUBUNIT</scope>
</reference>
<proteinExistence type="evidence at protein level"/>
<organism>
    <name type="scientific">Haloarcula marismortui (strain ATCC 43049 / DSM 3752 / JCM 8966 / VKM B-1809)</name>
    <name type="common">Halobacterium marismortui</name>
    <dbReference type="NCBI Taxonomy" id="272569"/>
    <lineage>
        <taxon>Archaea</taxon>
        <taxon>Methanobacteriati</taxon>
        <taxon>Methanobacteriota</taxon>
        <taxon>Stenosarchaea group</taxon>
        <taxon>Halobacteria</taxon>
        <taxon>Halobacteriales</taxon>
        <taxon>Haloarculaceae</taxon>
        <taxon>Haloarcula</taxon>
    </lineage>
</organism>
<dbReference type="EMBL" id="J05222">
    <property type="protein sequence ID" value="AAA86860.1"/>
    <property type="molecule type" value="Genomic_DNA"/>
</dbReference>
<dbReference type="EMBL" id="AY596297">
    <property type="protein sequence ID" value="AAV46527.1"/>
    <property type="molecule type" value="Genomic_DNA"/>
</dbReference>
<dbReference type="PIR" id="D35063">
    <property type="entry name" value="R5HS6H"/>
</dbReference>
<dbReference type="PDB" id="1FFK">
    <property type="method" value="X-ray"/>
    <property type="resolution" value="2.40 A"/>
    <property type="chains" value="C=1-246"/>
</dbReference>
<dbReference type="PDB" id="1JJ2">
    <property type="method" value="X-ray"/>
    <property type="resolution" value="2.40 A"/>
    <property type="chains" value="C=1-246"/>
</dbReference>
<dbReference type="PDB" id="1K73">
    <property type="method" value="X-ray"/>
    <property type="resolution" value="3.01 A"/>
    <property type="chains" value="E=1-246"/>
</dbReference>
<dbReference type="PDB" id="1K8A">
    <property type="method" value="X-ray"/>
    <property type="resolution" value="3.00 A"/>
    <property type="chains" value="E=1-246"/>
</dbReference>
<dbReference type="PDB" id="1K9M">
    <property type="method" value="X-ray"/>
    <property type="resolution" value="3.00 A"/>
    <property type="chains" value="E=1-246"/>
</dbReference>
<dbReference type="PDB" id="1KC8">
    <property type="method" value="X-ray"/>
    <property type="resolution" value="3.01 A"/>
    <property type="chains" value="E=1-246"/>
</dbReference>
<dbReference type="PDB" id="1KD1">
    <property type="method" value="X-ray"/>
    <property type="resolution" value="3.00 A"/>
    <property type="chains" value="E=1-246"/>
</dbReference>
<dbReference type="PDB" id="1KQS">
    <property type="method" value="X-ray"/>
    <property type="resolution" value="3.10 A"/>
    <property type="chains" value="C=1-246"/>
</dbReference>
<dbReference type="PDB" id="1M1K">
    <property type="method" value="X-ray"/>
    <property type="resolution" value="3.20 A"/>
    <property type="chains" value="E=1-246"/>
</dbReference>
<dbReference type="PDB" id="1M90">
    <property type="method" value="X-ray"/>
    <property type="resolution" value="2.80 A"/>
    <property type="chains" value="E=1-246"/>
</dbReference>
<dbReference type="PDB" id="1ML5">
    <property type="method" value="EM"/>
    <property type="resolution" value="14.00 A"/>
    <property type="chains" value="f=1-246"/>
</dbReference>
<dbReference type="PDB" id="1N8R">
    <property type="method" value="X-ray"/>
    <property type="resolution" value="3.00 A"/>
    <property type="chains" value="E=1-246"/>
</dbReference>
<dbReference type="PDB" id="1NJI">
    <property type="method" value="X-ray"/>
    <property type="resolution" value="3.00 A"/>
    <property type="chains" value="E=1-246"/>
</dbReference>
<dbReference type="PDB" id="1Q7Y">
    <property type="method" value="X-ray"/>
    <property type="resolution" value="3.20 A"/>
    <property type="chains" value="E=1-246"/>
</dbReference>
<dbReference type="PDB" id="1Q81">
    <property type="method" value="X-ray"/>
    <property type="resolution" value="2.95 A"/>
    <property type="chains" value="E=1-246"/>
</dbReference>
<dbReference type="PDB" id="1Q82">
    <property type="method" value="X-ray"/>
    <property type="resolution" value="2.98 A"/>
    <property type="chains" value="E=1-246"/>
</dbReference>
<dbReference type="PDB" id="1Q86">
    <property type="method" value="X-ray"/>
    <property type="resolution" value="3.00 A"/>
    <property type="chains" value="E=1-246"/>
</dbReference>
<dbReference type="PDB" id="1QVF">
    <property type="method" value="X-ray"/>
    <property type="resolution" value="3.10 A"/>
    <property type="chains" value="C=1-246"/>
</dbReference>
<dbReference type="PDB" id="1QVG">
    <property type="method" value="X-ray"/>
    <property type="resolution" value="2.90 A"/>
    <property type="chains" value="C=1-246"/>
</dbReference>
<dbReference type="PDB" id="1S72">
    <property type="method" value="X-ray"/>
    <property type="resolution" value="2.40 A"/>
    <property type="chains" value="C=1-246"/>
</dbReference>
<dbReference type="PDB" id="1VQ4">
    <property type="method" value="X-ray"/>
    <property type="resolution" value="2.70 A"/>
    <property type="chains" value="C=1-246"/>
</dbReference>
<dbReference type="PDB" id="1VQ5">
    <property type="method" value="X-ray"/>
    <property type="resolution" value="2.60 A"/>
    <property type="chains" value="C=1-246"/>
</dbReference>
<dbReference type="PDB" id="1VQ6">
    <property type="method" value="X-ray"/>
    <property type="resolution" value="2.70 A"/>
    <property type="chains" value="C=1-246"/>
</dbReference>
<dbReference type="PDB" id="1VQ7">
    <property type="method" value="X-ray"/>
    <property type="resolution" value="2.50 A"/>
    <property type="chains" value="C=1-246"/>
</dbReference>
<dbReference type="PDB" id="1VQ8">
    <property type="method" value="X-ray"/>
    <property type="resolution" value="2.20 A"/>
    <property type="chains" value="C=1-246"/>
</dbReference>
<dbReference type="PDB" id="1VQ9">
    <property type="method" value="X-ray"/>
    <property type="resolution" value="2.40 A"/>
    <property type="chains" value="C=1-246"/>
</dbReference>
<dbReference type="PDB" id="1VQK">
    <property type="method" value="X-ray"/>
    <property type="resolution" value="2.30 A"/>
    <property type="chains" value="C=1-246"/>
</dbReference>
<dbReference type="PDB" id="1VQL">
    <property type="method" value="X-ray"/>
    <property type="resolution" value="2.30 A"/>
    <property type="chains" value="C=1-246"/>
</dbReference>
<dbReference type="PDB" id="1VQM">
    <property type="method" value="X-ray"/>
    <property type="resolution" value="2.30 A"/>
    <property type="chains" value="C=1-246"/>
</dbReference>
<dbReference type="PDB" id="1VQN">
    <property type="method" value="X-ray"/>
    <property type="resolution" value="2.40 A"/>
    <property type="chains" value="C=1-246"/>
</dbReference>
<dbReference type="PDB" id="1VQO">
    <property type="method" value="X-ray"/>
    <property type="resolution" value="2.20 A"/>
    <property type="chains" value="C=1-246"/>
</dbReference>
<dbReference type="PDB" id="1VQP">
    <property type="method" value="X-ray"/>
    <property type="resolution" value="2.25 A"/>
    <property type="chains" value="C=1-246"/>
</dbReference>
<dbReference type="PDB" id="1W2B">
    <property type="method" value="X-ray"/>
    <property type="resolution" value="3.50 A"/>
    <property type="chains" value="C=1-246"/>
</dbReference>
<dbReference type="PDB" id="1YHQ">
    <property type="method" value="X-ray"/>
    <property type="resolution" value="2.40 A"/>
    <property type="chains" value="C=1-246"/>
</dbReference>
<dbReference type="PDB" id="1YI2">
    <property type="method" value="X-ray"/>
    <property type="resolution" value="2.65 A"/>
    <property type="chains" value="C=1-246"/>
</dbReference>
<dbReference type="PDB" id="1YIJ">
    <property type="method" value="X-ray"/>
    <property type="resolution" value="2.60 A"/>
    <property type="chains" value="C=1-246"/>
</dbReference>
<dbReference type="PDB" id="1YIT">
    <property type="method" value="X-ray"/>
    <property type="resolution" value="2.80 A"/>
    <property type="chains" value="C=1-246"/>
</dbReference>
<dbReference type="PDB" id="1YJ9">
    <property type="method" value="X-ray"/>
    <property type="resolution" value="2.90 A"/>
    <property type="chains" value="C=1-246"/>
</dbReference>
<dbReference type="PDB" id="1YJN">
    <property type="method" value="X-ray"/>
    <property type="resolution" value="3.00 A"/>
    <property type="chains" value="C=1-246"/>
</dbReference>
<dbReference type="PDB" id="1YJW">
    <property type="method" value="X-ray"/>
    <property type="resolution" value="2.90 A"/>
    <property type="chains" value="C=1-246"/>
</dbReference>
<dbReference type="PDB" id="2OTJ">
    <property type="method" value="X-ray"/>
    <property type="resolution" value="2.90 A"/>
    <property type="chains" value="C=1-246"/>
</dbReference>
<dbReference type="PDB" id="2OTL">
    <property type="method" value="X-ray"/>
    <property type="resolution" value="2.70 A"/>
    <property type="chains" value="C=1-246"/>
</dbReference>
<dbReference type="PDB" id="2QA4">
    <property type="method" value="X-ray"/>
    <property type="resolution" value="3.00 A"/>
    <property type="chains" value="C=1-246"/>
</dbReference>
<dbReference type="PDB" id="2QEX">
    <property type="method" value="X-ray"/>
    <property type="resolution" value="2.90 A"/>
    <property type="chains" value="C=1-246"/>
</dbReference>
<dbReference type="PDB" id="3CC2">
    <property type="method" value="X-ray"/>
    <property type="resolution" value="2.40 A"/>
    <property type="chains" value="C=1-246"/>
</dbReference>
<dbReference type="PDB" id="3CC4">
    <property type="method" value="X-ray"/>
    <property type="resolution" value="2.70 A"/>
    <property type="chains" value="C=1-246"/>
</dbReference>
<dbReference type="PDB" id="3CC7">
    <property type="method" value="X-ray"/>
    <property type="resolution" value="2.70 A"/>
    <property type="chains" value="C=1-246"/>
</dbReference>
<dbReference type="PDB" id="3CCE">
    <property type="method" value="X-ray"/>
    <property type="resolution" value="2.75 A"/>
    <property type="chains" value="C=1-246"/>
</dbReference>
<dbReference type="PDB" id="3CCJ">
    <property type="method" value="X-ray"/>
    <property type="resolution" value="2.70 A"/>
    <property type="chains" value="C=1-246"/>
</dbReference>
<dbReference type="PDB" id="3CCL">
    <property type="method" value="X-ray"/>
    <property type="resolution" value="2.90 A"/>
    <property type="chains" value="C=1-246"/>
</dbReference>
<dbReference type="PDB" id="3CCM">
    <property type="method" value="X-ray"/>
    <property type="resolution" value="2.55 A"/>
    <property type="chains" value="C=1-246"/>
</dbReference>
<dbReference type="PDB" id="3CCQ">
    <property type="method" value="X-ray"/>
    <property type="resolution" value="2.90 A"/>
    <property type="chains" value="C=1-246"/>
</dbReference>
<dbReference type="PDB" id="3CCR">
    <property type="method" value="X-ray"/>
    <property type="resolution" value="3.00 A"/>
    <property type="chains" value="C=1-246"/>
</dbReference>
<dbReference type="PDB" id="3CCS">
    <property type="method" value="X-ray"/>
    <property type="resolution" value="2.95 A"/>
    <property type="chains" value="C=1-246"/>
</dbReference>
<dbReference type="PDB" id="3CCU">
    <property type="method" value="X-ray"/>
    <property type="resolution" value="2.80 A"/>
    <property type="chains" value="C=1-246"/>
</dbReference>
<dbReference type="PDB" id="3CCV">
    <property type="method" value="X-ray"/>
    <property type="resolution" value="2.90 A"/>
    <property type="chains" value="C=1-246"/>
</dbReference>
<dbReference type="PDB" id="3CD6">
    <property type="method" value="X-ray"/>
    <property type="resolution" value="2.75 A"/>
    <property type="chains" value="C=1-246"/>
</dbReference>
<dbReference type="PDB" id="3CMA">
    <property type="method" value="X-ray"/>
    <property type="resolution" value="2.80 A"/>
    <property type="chains" value="C=1-246"/>
</dbReference>
<dbReference type="PDB" id="3CME">
    <property type="method" value="X-ray"/>
    <property type="resolution" value="2.95 A"/>
    <property type="chains" value="C=1-246"/>
</dbReference>
<dbReference type="PDB" id="3CPW">
    <property type="method" value="X-ray"/>
    <property type="resolution" value="2.70 A"/>
    <property type="chains" value="C=1-246"/>
</dbReference>
<dbReference type="PDB" id="3CXC">
    <property type="method" value="X-ray"/>
    <property type="resolution" value="3.00 A"/>
    <property type="chains" value="C=1-246"/>
</dbReference>
<dbReference type="PDB" id="3G4S">
    <property type="method" value="X-ray"/>
    <property type="resolution" value="3.20 A"/>
    <property type="chains" value="C=1-246"/>
</dbReference>
<dbReference type="PDB" id="3G6E">
    <property type="method" value="X-ray"/>
    <property type="resolution" value="2.70 A"/>
    <property type="chains" value="C=1-246"/>
</dbReference>
<dbReference type="PDB" id="3G71">
    <property type="method" value="X-ray"/>
    <property type="resolution" value="2.85 A"/>
    <property type="chains" value="C=1-246"/>
</dbReference>
<dbReference type="PDB" id="3I55">
    <property type="method" value="X-ray"/>
    <property type="resolution" value="3.11 A"/>
    <property type="chains" value="C=1-246"/>
</dbReference>
<dbReference type="PDB" id="3I56">
    <property type="method" value="X-ray"/>
    <property type="resolution" value="2.90 A"/>
    <property type="chains" value="C=1-246"/>
</dbReference>
<dbReference type="PDB" id="3OW2">
    <property type="method" value="X-ray"/>
    <property type="resolution" value="2.70 A"/>
    <property type="chains" value="C=1-246"/>
</dbReference>
<dbReference type="PDB" id="4ADX">
    <property type="method" value="EM"/>
    <property type="resolution" value="6.60 A"/>
    <property type="chains" value="C=1-246"/>
</dbReference>
<dbReference type="PDB" id="4V42">
    <property type="method" value="X-ray"/>
    <property type="resolution" value="5.50 A"/>
    <property type="chains" value="BF=1-246"/>
</dbReference>
<dbReference type="PDB" id="4V4R">
    <property type="method" value="X-ray"/>
    <property type="resolution" value="5.90 A"/>
    <property type="chains" value="F=1-246"/>
</dbReference>
<dbReference type="PDB" id="4V4S">
    <property type="method" value="X-ray"/>
    <property type="resolution" value="6.76 A"/>
    <property type="chains" value="F=1-246"/>
</dbReference>
<dbReference type="PDB" id="4V4T">
    <property type="method" value="X-ray"/>
    <property type="resolution" value="6.46 A"/>
    <property type="chains" value="F=1-246"/>
</dbReference>
<dbReference type="PDB" id="4V9F">
    <property type="method" value="X-ray"/>
    <property type="resolution" value="2.40 A"/>
    <property type="chains" value="C=1-246"/>
</dbReference>
<dbReference type="PDBsum" id="1FFK"/>
<dbReference type="PDBsum" id="1JJ2"/>
<dbReference type="PDBsum" id="1K73"/>
<dbReference type="PDBsum" id="1K8A"/>
<dbReference type="PDBsum" id="1K9M"/>
<dbReference type="PDBsum" id="1KC8"/>
<dbReference type="PDBsum" id="1KD1"/>
<dbReference type="PDBsum" id="1KQS"/>
<dbReference type="PDBsum" id="1M1K"/>
<dbReference type="PDBsum" id="1M90"/>
<dbReference type="PDBsum" id="1ML5"/>
<dbReference type="PDBsum" id="1N8R"/>
<dbReference type="PDBsum" id="1NJI"/>
<dbReference type="PDBsum" id="1Q7Y"/>
<dbReference type="PDBsum" id="1Q81"/>
<dbReference type="PDBsum" id="1Q82"/>
<dbReference type="PDBsum" id="1Q86"/>
<dbReference type="PDBsum" id="1QVF"/>
<dbReference type="PDBsum" id="1QVG"/>
<dbReference type="PDBsum" id="1S72"/>
<dbReference type="PDBsum" id="1VQ4"/>
<dbReference type="PDBsum" id="1VQ5"/>
<dbReference type="PDBsum" id="1VQ6"/>
<dbReference type="PDBsum" id="1VQ7"/>
<dbReference type="PDBsum" id="1VQ8"/>
<dbReference type="PDBsum" id="1VQ9"/>
<dbReference type="PDBsum" id="1VQK"/>
<dbReference type="PDBsum" id="1VQL"/>
<dbReference type="PDBsum" id="1VQM"/>
<dbReference type="PDBsum" id="1VQN"/>
<dbReference type="PDBsum" id="1VQO"/>
<dbReference type="PDBsum" id="1VQP"/>
<dbReference type="PDBsum" id="1W2B"/>
<dbReference type="PDBsum" id="1YHQ"/>
<dbReference type="PDBsum" id="1YI2"/>
<dbReference type="PDBsum" id="1YIJ"/>
<dbReference type="PDBsum" id="1YIT"/>
<dbReference type="PDBsum" id="1YJ9"/>
<dbReference type="PDBsum" id="1YJN"/>
<dbReference type="PDBsum" id="1YJW"/>
<dbReference type="PDBsum" id="2OTJ"/>
<dbReference type="PDBsum" id="2OTL"/>
<dbReference type="PDBsum" id="2QA4"/>
<dbReference type="PDBsum" id="2QEX"/>
<dbReference type="PDBsum" id="3CC2"/>
<dbReference type="PDBsum" id="3CC4"/>
<dbReference type="PDBsum" id="3CC7"/>
<dbReference type="PDBsum" id="3CCE"/>
<dbReference type="PDBsum" id="3CCJ"/>
<dbReference type="PDBsum" id="3CCL"/>
<dbReference type="PDBsum" id="3CCM"/>
<dbReference type="PDBsum" id="3CCQ"/>
<dbReference type="PDBsum" id="3CCR"/>
<dbReference type="PDBsum" id="3CCS"/>
<dbReference type="PDBsum" id="3CCU"/>
<dbReference type="PDBsum" id="3CCV"/>
<dbReference type="PDBsum" id="3CD6"/>
<dbReference type="PDBsum" id="3CMA"/>
<dbReference type="PDBsum" id="3CME"/>
<dbReference type="PDBsum" id="3CPW"/>
<dbReference type="PDBsum" id="3CXC"/>
<dbReference type="PDBsum" id="3G4S"/>
<dbReference type="PDBsum" id="3G6E"/>
<dbReference type="PDBsum" id="3G71"/>
<dbReference type="PDBsum" id="3I55"/>
<dbReference type="PDBsum" id="3I56"/>
<dbReference type="PDBsum" id="3OW2"/>
<dbReference type="PDBsum" id="4ADX"/>
<dbReference type="PDBsum" id="4V42"/>
<dbReference type="PDBsum" id="4V4R"/>
<dbReference type="PDBsum" id="4V4S"/>
<dbReference type="PDBsum" id="4V4T"/>
<dbReference type="PDBsum" id="4V9F"/>
<dbReference type="SMR" id="P12735"/>
<dbReference type="IntAct" id="P12735">
    <property type="interactions" value="3"/>
</dbReference>
<dbReference type="STRING" id="272569.rrnAC1610"/>
<dbReference type="PaxDb" id="272569-rrnAC1610"/>
<dbReference type="EnsemblBacteria" id="AAV46527">
    <property type="protein sequence ID" value="AAV46527"/>
    <property type="gene ID" value="rrnAC1610"/>
</dbReference>
<dbReference type="KEGG" id="hma:rrnAC1610"/>
<dbReference type="PATRIC" id="fig|272569.17.peg.2300"/>
<dbReference type="eggNOG" id="arCOG04071">
    <property type="taxonomic scope" value="Archaea"/>
</dbReference>
<dbReference type="HOGENOM" id="CLU_026535_0_0_2"/>
<dbReference type="EvolutionaryTrace" id="P12735"/>
<dbReference type="Proteomes" id="UP000001169">
    <property type="component" value="Chromosome I"/>
</dbReference>
<dbReference type="GO" id="GO:1990904">
    <property type="term" value="C:ribonucleoprotein complex"/>
    <property type="evidence" value="ECO:0007669"/>
    <property type="project" value="UniProtKB-KW"/>
</dbReference>
<dbReference type="GO" id="GO:0005840">
    <property type="term" value="C:ribosome"/>
    <property type="evidence" value="ECO:0007669"/>
    <property type="project" value="UniProtKB-KW"/>
</dbReference>
<dbReference type="GO" id="GO:0019843">
    <property type="term" value="F:rRNA binding"/>
    <property type="evidence" value="ECO:0007669"/>
    <property type="project" value="UniProtKB-UniRule"/>
</dbReference>
<dbReference type="GO" id="GO:0003735">
    <property type="term" value="F:structural constituent of ribosome"/>
    <property type="evidence" value="ECO:0007669"/>
    <property type="project" value="InterPro"/>
</dbReference>
<dbReference type="GO" id="GO:0006412">
    <property type="term" value="P:translation"/>
    <property type="evidence" value="ECO:0007669"/>
    <property type="project" value="UniProtKB-UniRule"/>
</dbReference>
<dbReference type="Gene3D" id="3.40.1370.10">
    <property type="match status" value="1"/>
</dbReference>
<dbReference type="HAMAP" id="MF_01328_A">
    <property type="entry name" value="Ribosomal_uL4_A"/>
    <property type="match status" value="1"/>
</dbReference>
<dbReference type="InterPro" id="IPR002136">
    <property type="entry name" value="Ribosomal_uL4"/>
</dbReference>
<dbReference type="InterPro" id="IPR023574">
    <property type="entry name" value="Ribosomal_uL4_dom_sf"/>
</dbReference>
<dbReference type="InterPro" id="IPR013000">
    <property type="entry name" value="Ribosomal_uL4_euk/arc_CS"/>
</dbReference>
<dbReference type="InterPro" id="IPR045240">
    <property type="entry name" value="Ribosomal_uL4_euk/arch"/>
</dbReference>
<dbReference type="InterPro" id="IPR019970">
    <property type="entry name" value="Ribosomall_uL4-arc"/>
</dbReference>
<dbReference type="NCBIfam" id="TIGR03672">
    <property type="entry name" value="rpl4p_arch"/>
    <property type="match status" value="1"/>
</dbReference>
<dbReference type="PANTHER" id="PTHR19431">
    <property type="entry name" value="60S RIBOSOMAL PROTEIN L4"/>
    <property type="match status" value="1"/>
</dbReference>
<dbReference type="Pfam" id="PF00573">
    <property type="entry name" value="Ribosomal_L4"/>
    <property type="match status" value="1"/>
</dbReference>
<dbReference type="SUPFAM" id="SSF52166">
    <property type="entry name" value="Ribosomal protein L4"/>
    <property type="match status" value="1"/>
</dbReference>
<dbReference type="PROSITE" id="PS00939">
    <property type="entry name" value="RIBOSOMAL_L1E"/>
    <property type="match status" value="1"/>
</dbReference>
<evidence type="ECO:0000250" key="1"/>
<evidence type="ECO:0000256" key="2">
    <source>
        <dbReference type="SAM" id="MobiDB-lite"/>
    </source>
</evidence>
<evidence type="ECO:0000269" key="3">
    <source>
    </source>
</evidence>
<evidence type="ECO:0000269" key="4">
    <source>
    </source>
</evidence>
<evidence type="ECO:0000305" key="5"/>
<evidence type="ECO:0007829" key="6">
    <source>
        <dbReference type="PDB" id="1VQ8"/>
    </source>
</evidence>
<evidence type="ECO:0007829" key="7">
    <source>
        <dbReference type="PDB" id="3CCU"/>
    </source>
</evidence>
<evidence type="ECO:0007829" key="8">
    <source>
        <dbReference type="PDB" id="3CME"/>
    </source>
</evidence>
<evidence type="ECO:0007829" key="9">
    <source>
        <dbReference type="PDB" id="3G71"/>
    </source>
</evidence>
<feature type="chain" id="PRO_0000129329" description="Large ribosomal subunit protein uL4">
    <location>
        <begin position="1"/>
        <end position="246"/>
    </location>
</feature>
<feature type="region of interest" description="Disordered" evidence="2">
    <location>
        <begin position="37"/>
        <end position="103"/>
    </location>
</feature>
<feature type="compositionally biased region" description="Basic and acidic residues" evidence="2">
    <location>
        <begin position="92"/>
        <end position="103"/>
    </location>
</feature>
<feature type="sequence conflict" description="In Ref. 3; AA sequence." evidence="5" ref="3">
    <original>V</original>
    <variation>K</variation>
    <location>
        <position position="154"/>
    </location>
</feature>
<feature type="strand" evidence="6">
    <location>
        <begin position="2"/>
        <end position="6"/>
    </location>
</feature>
<feature type="turn" evidence="8">
    <location>
        <begin position="8"/>
        <end position="10"/>
    </location>
</feature>
<feature type="strand" evidence="6">
    <location>
        <begin position="12"/>
        <end position="17"/>
    </location>
</feature>
<feature type="helix" evidence="6">
    <location>
        <begin position="20"/>
        <end position="23"/>
    </location>
</feature>
<feature type="helix" evidence="6">
    <location>
        <begin position="28"/>
        <end position="41"/>
    </location>
</feature>
<feature type="turn" evidence="6">
    <location>
        <begin position="50"/>
        <end position="54"/>
    </location>
</feature>
<feature type="strand" evidence="6">
    <location>
        <begin position="63"/>
        <end position="66"/>
    </location>
</feature>
<feature type="strand" evidence="7">
    <location>
        <begin position="71"/>
        <end position="73"/>
    </location>
</feature>
<feature type="strand" evidence="9">
    <location>
        <begin position="94"/>
        <end position="96"/>
    </location>
</feature>
<feature type="helix" evidence="6">
    <location>
        <begin position="104"/>
        <end position="117"/>
    </location>
</feature>
<feature type="helix" evidence="6">
    <location>
        <begin position="121"/>
        <end position="127"/>
    </location>
</feature>
<feature type="strand" evidence="6">
    <location>
        <begin position="137"/>
        <end position="140"/>
    </location>
</feature>
<feature type="helix" evidence="6">
    <location>
        <begin position="142"/>
        <end position="146"/>
    </location>
</feature>
<feature type="helix" evidence="6">
    <location>
        <begin position="150"/>
        <end position="159"/>
    </location>
</feature>
<feature type="helix" evidence="6">
    <location>
        <begin position="164"/>
        <end position="168"/>
    </location>
</feature>
<feature type="helix" evidence="6">
    <location>
        <begin position="178"/>
        <end position="182"/>
    </location>
</feature>
<feature type="strand" evidence="6">
    <location>
        <begin position="193"/>
        <end position="199"/>
    </location>
</feature>
<feature type="turn" evidence="6">
    <location>
        <begin position="202"/>
        <end position="206"/>
    </location>
</feature>
<feature type="strand" evidence="6">
    <location>
        <begin position="211"/>
        <end position="214"/>
    </location>
</feature>
<feature type="turn" evidence="6">
    <location>
        <begin position="215"/>
        <end position="217"/>
    </location>
</feature>
<feature type="helix" evidence="6">
    <location>
        <begin position="220"/>
        <end position="223"/>
    </location>
</feature>
<feature type="helix" evidence="6">
    <location>
        <begin position="225"/>
        <end position="227"/>
    </location>
</feature>
<feature type="strand" evidence="6">
    <location>
        <begin position="233"/>
        <end position="236"/>
    </location>
</feature>
<feature type="helix" evidence="6">
    <location>
        <begin position="237"/>
        <end position="242"/>
    </location>
</feature>
<feature type="helix" evidence="6">
    <location>
        <begin position="243"/>
        <end position="245"/>
    </location>
</feature>
<gene>
    <name type="primary">rpl4</name>
    <name type="ordered locus">rrnAC1610</name>
</gene>
<keyword id="KW-0002">3D-structure</keyword>
<keyword id="KW-0903">Direct protein sequencing</keyword>
<keyword id="KW-1185">Reference proteome</keyword>
<keyword id="KW-0687">Ribonucleoprotein</keyword>
<keyword id="KW-0689">Ribosomal protein</keyword>
<keyword id="KW-0694">RNA-binding</keyword>
<keyword id="KW-0699">rRNA-binding</keyword>